<comment type="function">
    <text evidence="1">Functions in the biosynthesis of branched-chain amino acids. Catalyzes the dehydration of (2R,3R)-2,3-dihydroxy-3-methylpentanoate (2,3-dihydroxy-3-methylvalerate) into 2-oxo-3-methylpentanoate (2-oxo-3-methylvalerate) and of (2R)-2,3-dihydroxy-3-methylbutanoate (2,3-dihydroxyisovalerate) into 2-oxo-3-methylbutanoate (2-oxoisovalerate), the penultimate precursor to L-isoleucine and L-valine, respectively.</text>
</comment>
<comment type="catalytic activity">
    <reaction evidence="1">
        <text>(2R)-2,3-dihydroxy-3-methylbutanoate = 3-methyl-2-oxobutanoate + H2O</text>
        <dbReference type="Rhea" id="RHEA:24809"/>
        <dbReference type="ChEBI" id="CHEBI:11851"/>
        <dbReference type="ChEBI" id="CHEBI:15377"/>
        <dbReference type="ChEBI" id="CHEBI:49072"/>
        <dbReference type="EC" id="4.2.1.9"/>
    </reaction>
    <physiologicalReaction direction="left-to-right" evidence="1">
        <dbReference type="Rhea" id="RHEA:24810"/>
    </physiologicalReaction>
</comment>
<comment type="catalytic activity">
    <reaction evidence="1">
        <text>(2R,3R)-2,3-dihydroxy-3-methylpentanoate = (S)-3-methyl-2-oxopentanoate + H2O</text>
        <dbReference type="Rhea" id="RHEA:27694"/>
        <dbReference type="ChEBI" id="CHEBI:15377"/>
        <dbReference type="ChEBI" id="CHEBI:35146"/>
        <dbReference type="ChEBI" id="CHEBI:49258"/>
        <dbReference type="EC" id="4.2.1.9"/>
    </reaction>
    <physiologicalReaction direction="left-to-right" evidence="1">
        <dbReference type="Rhea" id="RHEA:27695"/>
    </physiologicalReaction>
</comment>
<comment type="cofactor">
    <cofactor evidence="1">
        <name>[2Fe-2S] cluster</name>
        <dbReference type="ChEBI" id="CHEBI:190135"/>
    </cofactor>
    <text evidence="1">Binds 1 [2Fe-2S] cluster per subunit. This cluster acts as a Lewis acid cofactor.</text>
</comment>
<comment type="cofactor">
    <cofactor evidence="1">
        <name>Mg(2+)</name>
        <dbReference type="ChEBI" id="CHEBI:18420"/>
    </cofactor>
</comment>
<comment type="pathway">
    <text evidence="1">Amino-acid biosynthesis; L-isoleucine biosynthesis; L-isoleucine from 2-oxobutanoate: step 3/4.</text>
</comment>
<comment type="pathway">
    <text evidence="1">Amino-acid biosynthesis; L-valine biosynthesis; L-valine from pyruvate: step 3/4.</text>
</comment>
<comment type="subunit">
    <text evidence="1">Homodimer.</text>
</comment>
<comment type="similarity">
    <text evidence="1">Belongs to the IlvD/Edd family.</text>
</comment>
<dbReference type="EC" id="4.2.1.9" evidence="1"/>
<dbReference type="EMBL" id="CP000607">
    <property type="protein sequence ID" value="ABP37181.1"/>
    <property type="molecule type" value="Genomic_DNA"/>
</dbReference>
<dbReference type="SMR" id="A4SFC2"/>
<dbReference type="STRING" id="290318.Cvib_1169"/>
<dbReference type="KEGG" id="pvi:Cvib_1169"/>
<dbReference type="eggNOG" id="COG0129">
    <property type="taxonomic scope" value="Bacteria"/>
</dbReference>
<dbReference type="HOGENOM" id="CLU_014271_4_2_10"/>
<dbReference type="OrthoDB" id="9807077at2"/>
<dbReference type="UniPathway" id="UPA00047">
    <property type="reaction ID" value="UER00057"/>
</dbReference>
<dbReference type="UniPathway" id="UPA00049">
    <property type="reaction ID" value="UER00061"/>
</dbReference>
<dbReference type="GO" id="GO:0005829">
    <property type="term" value="C:cytosol"/>
    <property type="evidence" value="ECO:0007669"/>
    <property type="project" value="TreeGrafter"/>
</dbReference>
<dbReference type="GO" id="GO:0051537">
    <property type="term" value="F:2 iron, 2 sulfur cluster binding"/>
    <property type="evidence" value="ECO:0007669"/>
    <property type="project" value="UniProtKB-UniRule"/>
</dbReference>
<dbReference type="GO" id="GO:0004160">
    <property type="term" value="F:dihydroxy-acid dehydratase activity"/>
    <property type="evidence" value="ECO:0007669"/>
    <property type="project" value="UniProtKB-UniRule"/>
</dbReference>
<dbReference type="GO" id="GO:0000287">
    <property type="term" value="F:magnesium ion binding"/>
    <property type="evidence" value="ECO:0007669"/>
    <property type="project" value="UniProtKB-UniRule"/>
</dbReference>
<dbReference type="GO" id="GO:0009097">
    <property type="term" value="P:isoleucine biosynthetic process"/>
    <property type="evidence" value="ECO:0007669"/>
    <property type="project" value="UniProtKB-UniRule"/>
</dbReference>
<dbReference type="GO" id="GO:0009099">
    <property type="term" value="P:L-valine biosynthetic process"/>
    <property type="evidence" value="ECO:0007669"/>
    <property type="project" value="UniProtKB-UniRule"/>
</dbReference>
<dbReference type="FunFam" id="3.50.30.80:FF:000001">
    <property type="entry name" value="Dihydroxy-acid dehydratase"/>
    <property type="match status" value="1"/>
</dbReference>
<dbReference type="Gene3D" id="3.50.30.80">
    <property type="entry name" value="IlvD/EDD C-terminal domain-like"/>
    <property type="match status" value="1"/>
</dbReference>
<dbReference type="HAMAP" id="MF_00012">
    <property type="entry name" value="IlvD"/>
    <property type="match status" value="1"/>
</dbReference>
<dbReference type="InterPro" id="IPR042096">
    <property type="entry name" value="Dihydro-acid_dehy_C"/>
</dbReference>
<dbReference type="InterPro" id="IPR004404">
    <property type="entry name" value="DihydroxyA_deHydtase"/>
</dbReference>
<dbReference type="InterPro" id="IPR020558">
    <property type="entry name" value="DiOHA_6PGluconate_deHydtase_CS"/>
</dbReference>
<dbReference type="InterPro" id="IPR056740">
    <property type="entry name" value="ILV_EDD_C"/>
</dbReference>
<dbReference type="InterPro" id="IPR000581">
    <property type="entry name" value="ILV_EDD_N"/>
</dbReference>
<dbReference type="InterPro" id="IPR037237">
    <property type="entry name" value="IlvD/EDD_N"/>
</dbReference>
<dbReference type="NCBIfam" id="TIGR00110">
    <property type="entry name" value="ilvD"/>
    <property type="match status" value="1"/>
</dbReference>
<dbReference type="NCBIfam" id="NF002068">
    <property type="entry name" value="PRK00911.1"/>
    <property type="match status" value="1"/>
</dbReference>
<dbReference type="PANTHER" id="PTHR43661">
    <property type="entry name" value="D-XYLONATE DEHYDRATASE"/>
    <property type="match status" value="1"/>
</dbReference>
<dbReference type="PANTHER" id="PTHR43661:SF3">
    <property type="entry name" value="D-XYLONATE DEHYDRATASE YAGF-RELATED"/>
    <property type="match status" value="1"/>
</dbReference>
<dbReference type="Pfam" id="PF24877">
    <property type="entry name" value="ILV_EDD_C"/>
    <property type="match status" value="1"/>
</dbReference>
<dbReference type="Pfam" id="PF00920">
    <property type="entry name" value="ILVD_EDD_N"/>
    <property type="match status" value="1"/>
</dbReference>
<dbReference type="SUPFAM" id="SSF143975">
    <property type="entry name" value="IlvD/EDD N-terminal domain-like"/>
    <property type="match status" value="1"/>
</dbReference>
<dbReference type="SUPFAM" id="SSF52016">
    <property type="entry name" value="LeuD/IlvD-like"/>
    <property type="match status" value="1"/>
</dbReference>
<dbReference type="PROSITE" id="PS00886">
    <property type="entry name" value="ILVD_EDD_1"/>
    <property type="match status" value="1"/>
</dbReference>
<dbReference type="PROSITE" id="PS00887">
    <property type="entry name" value="ILVD_EDD_2"/>
    <property type="match status" value="1"/>
</dbReference>
<organism>
    <name type="scientific">Chlorobium phaeovibrioides (strain DSM 265 / 1930)</name>
    <name type="common">Prosthecochloris vibrioformis (strain DSM 265)</name>
    <dbReference type="NCBI Taxonomy" id="290318"/>
    <lineage>
        <taxon>Bacteria</taxon>
        <taxon>Pseudomonadati</taxon>
        <taxon>Chlorobiota</taxon>
        <taxon>Chlorobiia</taxon>
        <taxon>Chlorobiales</taxon>
        <taxon>Chlorobiaceae</taxon>
        <taxon>Chlorobium/Pelodictyon group</taxon>
        <taxon>Chlorobium</taxon>
    </lineage>
</organism>
<protein>
    <recommendedName>
        <fullName evidence="1">Dihydroxy-acid dehydratase</fullName>
        <shortName evidence="1">DAD</shortName>
        <ecNumber evidence="1">4.2.1.9</ecNumber>
    </recommendedName>
</protein>
<evidence type="ECO:0000255" key="1">
    <source>
        <dbReference type="HAMAP-Rule" id="MF_00012"/>
    </source>
</evidence>
<name>ILVD_CHLPM</name>
<gene>
    <name evidence="1" type="primary">ilvD</name>
    <name type="ordered locus">Cvib_1169</name>
</gene>
<keyword id="KW-0001">2Fe-2S</keyword>
<keyword id="KW-0028">Amino-acid biosynthesis</keyword>
<keyword id="KW-0100">Branched-chain amino acid biosynthesis</keyword>
<keyword id="KW-0408">Iron</keyword>
<keyword id="KW-0411">Iron-sulfur</keyword>
<keyword id="KW-0456">Lyase</keyword>
<keyword id="KW-0460">Magnesium</keyword>
<keyword id="KW-0479">Metal-binding</keyword>
<accession>A4SFC2</accession>
<feature type="chain" id="PRO_1000073982" description="Dihydroxy-acid dehydratase">
    <location>
        <begin position="1"/>
        <end position="565"/>
    </location>
</feature>
<feature type="active site" description="Proton acceptor" evidence="1">
    <location>
        <position position="473"/>
    </location>
</feature>
<feature type="binding site" evidence="1">
    <location>
        <position position="80"/>
    </location>
    <ligand>
        <name>Mg(2+)</name>
        <dbReference type="ChEBI" id="CHEBI:18420"/>
    </ligand>
</feature>
<feature type="binding site" evidence="1">
    <location>
        <position position="121"/>
    </location>
    <ligand>
        <name>[2Fe-2S] cluster</name>
        <dbReference type="ChEBI" id="CHEBI:190135"/>
    </ligand>
</feature>
<feature type="binding site" evidence="1">
    <location>
        <position position="122"/>
    </location>
    <ligand>
        <name>Mg(2+)</name>
        <dbReference type="ChEBI" id="CHEBI:18420"/>
    </ligand>
</feature>
<feature type="binding site" description="via carbamate group" evidence="1">
    <location>
        <position position="123"/>
    </location>
    <ligand>
        <name>Mg(2+)</name>
        <dbReference type="ChEBI" id="CHEBI:18420"/>
    </ligand>
</feature>
<feature type="binding site" evidence="1">
    <location>
        <position position="194"/>
    </location>
    <ligand>
        <name>[2Fe-2S] cluster</name>
        <dbReference type="ChEBI" id="CHEBI:190135"/>
    </ligand>
</feature>
<feature type="binding site" evidence="1">
    <location>
        <position position="447"/>
    </location>
    <ligand>
        <name>Mg(2+)</name>
        <dbReference type="ChEBI" id="CHEBI:18420"/>
    </ligand>
</feature>
<feature type="modified residue" description="N6-carboxylysine" evidence="1">
    <location>
        <position position="123"/>
    </location>
</feature>
<sequence length="565" mass="59693">MRSDTIKTGFEKAPHRSLLKATGTIKEKGDYRKPFIGICNSFNELIPGHAHLQELGRIAKEEVRKAGGVPFEFNTIGVCDGIAMGHIGMRYSLASRELIADSVETVAEAHRLDGLVCIPNCDKITPGMMMAALRINIPVIFVSGGPMKAGCTPSGKTVDLISVFEAVGQHSTGEISEQELESIEENACPGCGSCSGMFTANSMNCLSEALGFALPGNGTILAVDPRRNELVREASRQIITLVKNNVRPRDILSREALLNAFALDFAMGGSTNTILHTLAIANEAELDFDFSELNALSARTPYICKVSPATMAVHIEDVDRAGGISAILHELSKVEGLLDLSVPTVTGHTLGENIADAEVKDRSVIRSVEDPYSATGGLCVLYGNLAPQGSVIKTGAVSAPMMKHTGPAKVYDCQDDAIKGIMEGEVKSGDVVVIRYEGPKGGPGMPEMLSPTSVIMGRGLGDSVALITDGRFSGGSRGACIGHISPEAAEKGPIAALQNGDTITIDIPGRTISVDLTDEDIASRIAALPDFQPKIKKGYLARYSQMVTSASTGAILKTPVSCEPK</sequence>
<proteinExistence type="inferred from homology"/>
<reference key="1">
    <citation type="submission" date="2007-03" db="EMBL/GenBank/DDBJ databases">
        <title>Complete sequence of Prosthecochloris vibrioformis DSM 265.</title>
        <authorList>
            <consortium name="US DOE Joint Genome Institute"/>
            <person name="Copeland A."/>
            <person name="Lucas S."/>
            <person name="Lapidus A."/>
            <person name="Barry K."/>
            <person name="Detter J.C."/>
            <person name="Glavina del Rio T."/>
            <person name="Hammon N."/>
            <person name="Israni S."/>
            <person name="Pitluck S."/>
            <person name="Schmutz J."/>
            <person name="Larimer F."/>
            <person name="Land M."/>
            <person name="Hauser L."/>
            <person name="Mikhailova N."/>
            <person name="Li T."/>
            <person name="Overmann J."/>
            <person name="Schuster S.C."/>
            <person name="Bryant D.A."/>
            <person name="Richardson P."/>
        </authorList>
    </citation>
    <scope>NUCLEOTIDE SEQUENCE [LARGE SCALE GENOMIC DNA]</scope>
    <source>
        <strain>DSM 265 / 1930</strain>
    </source>
</reference>